<feature type="chain" id="PRO_0000053925" description="Voltage-dependent N-type calcium channel subunit alpha-1B">
    <location>
        <begin position="1" status="less than"/>
        <end position="159" status="greater than"/>
    </location>
</feature>
<feature type="transmembrane region" description="Helical; Name=S3 of repeat IV" evidence="5">
    <location>
        <begin position="1" status="less than"/>
        <end position="5"/>
    </location>
</feature>
<feature type="topological domain" description="Extracellular" evidence="5">
    <location>
        <begin position="6"/>
        <end position="13"/>
    </location>
</feature>
<feature type="transmembrane region" description="Helical; Name=S4 of repeat IV" evidence="5">
    <location>
        <begin position="14"/>
        <end position="32"/>
    </location>
</feature>
<feature type="topological domain" description="Cytoplasmic" evidence="5">
    <location>
        <begin position="33"/>
        <end position="51"/>
    </location>
</feature>
<feature type="transmembrane region" description="Helical; Name=S5 of repeat IV" evidence="5">
    <location>
        <begin position="52"/>
        <end position="71"/>
    </location>
</feature>
<feature type="topological domain" description="Extracellular" evidence="5">
    <location>
        <begin position="72"/>
        <end position="135"/>
    </location>
</feature>
<feature type="transmembrane region" description="Helical; Name=S6 of repeat IV" evidence="5">
    <location>
        <begin position="136"/>
        <end position="155"/>
    </location>
</feature>
<feature type="topological domain" description="Cytoplasmic" evidence="5">
    <location>
        <begin position="156"/>
        <end position="159" status="greater than"/>
    </location>
</feature>
<feature type="repeat" description="IV">
    <location>
        <begin position="1" status="less than"/>
        <end position="159" status="greater than"/>
    </location>
</feature>
<feature type="site" description="Calcium ion selectivity and permeability" evidence="2">
    <location>
        <position position="105"/>
    </location>
</feature>
<feature type="glycosylation site" description="N-linked (GlcNAc...) asparagine" evidence="5">
    <location>
        <position position="13"/>
    </location>
</feature>
<feature type="non-terminal residue">
    <location>
        <position position="1"/>
    </location>
</feature>
<feature type="non-terminal residue">
    <location>
        <position position="159"/>
    </location>
</feature>
<comment type="function">
    <text evidence="4">Voltage-sensitive calcium channels (VSCC) mediate the entry of calcium ions into excitable cells and are also involved in a variety of calcium-dependent processes, including muscle contraction, hormone or neurotransmitter release, gene expression, cell motility, cell division and cell death. This alpha-1B subunit gives rise to N-type calcium currents. N-type calcium channels belong to the 'high-voltage activated' (HVA) group. They are involved in pain signaling. Calcium channels containing alpha-1B subunit may play a role in directed migration of immature neurons. Mediates Ca(2+) release probability at hippocampal neuronal soma and synaptic terminals.</text>
</comment>
<comment type="catalytic activity">
    <reaction evidence="4">
        <text>Ca(2+)(in) = Ca(2+)(out)</text>
        <dbReference type="Rhea" id="RHEA:29671"/>
        <dbReference type="ChEBI" id="CHEBI:29108"/>
    </reaction>
</comment>
<comment type="subunit">
    <text evidence="1">Multisubunit complex consisting of alpha-1, alpha-2, beta and delta subunits in a 1:1:1:1 ratio. The channel activity is directed by the pore-forming and voltage-sensitive alpha-1 subunit. In many cases, this subunit is sufficient to generate voltage-sensitive calcium channel activity. The auxiliary subunits beta and alpha-2/delta linked by a disulfide bridge regulate the channel activity. Interacts with RIMBP2.</text>
</comment>
<comment type="subcellular location">
    <subcellularLocation>
        <location evidence="3">Membrane</location>
        <topology evidence="5">Multi-pass membrane protein</topology>
    </subcellularLocation>
</comment>
<comment type="domain">
    <text>Each of the four internal repeats contains five hydrophobic transmembrane segments (S1, S2, S3, S5, S6) and one positively charged transmembrane segment (S4). S4 segments probably represent the voltage-sensor and are characterized by a series of positively charged amino acids at every third position.</text>
</comment>
<comment type="PTM">
    <text evidence="4">Phosphorylated in vitro by CaM-kinase II, PKA, PKC and CGPK.</text>
</comment>
<comment type="similarity">
    <text evidence="6">Belongs to the calcium channel alpha-1 subunit (TC 1.A.1.11) family. CACNA1B subfamily.</text>
</comment>
<evidence type="ECO:0000250" key="1">
    <source>
        <dbReference type="UniProtKB" id="O55017"/>
    </source>
</evidence>
<evidence type="ECO:0000250" key="2">
    <source>
        <dbReference type="UniProtKB" id="P15381"/>
    </source>
</evidence>
<evidence type="ECO:0000250" key="3">
    <source>
        <dbReference type="UniProtKB" id="Q00975"/>
    </source>
</evidence>
<evidence type="ECO:0000250" key="4">
    <source>
        <dbReference type="UniProtKB" id="Q02294"/>
    </source>
</evidence>
<evidence type="ECO:0000255" key="5"/>
<evidence type="ECO:0000305" key="6"/>
<organism>
    <name type="scientific">Gallus gallus</name>
    <name type="common">Chicken</name>
    <dbReference type="NCBI Taxonomy" id="9031"/>
    <lineage>
        <taxon>Eukaryota</taxon>
        <taxon>Metazoa</taxon>
        <taxon>Chordata</taxon>
        <taxon>Craniata</taxon>
        <taxon>Vertebrata</taxon>
        <taxon>Euteleostomi</taxon>
        <taxon>Archelosauria</taxon>
        <taxon>Archosauria</taxon>
        <taxon>Dinosauria</taxon>
        <taxon>Saurischia</taxon>
        <taxon>Theropoda</taxon>
        <taxon>Coelurosauria</taxon>
        <taxon>Aves</taxon>
        <taxon>Neognathae</taxon>
        <taxon>Galloanserae</taxon>
        <taxon>Galliformes</taxon>
        <taxon>Phasianidae</taxon>
        <taxon>Phasianinae</taxon>
        <taxon>Gallus</taxon>
    </lineage>
</organism>
<sequence length="159" mass="18327">LVTEIADTDNFINLSFLRLFRAARLIKLLRQGYTIRILLWTFVQSFKALPYVCLLIAMLFFIYAIIGMQVFGNIALNDETSINRHNNFRTFLQALMLLFRSATGEAWHEIMLSCLSNRACDPLSGLTKNECGSDFAYFYFVSFIFLCSFLMLNLFVAVI</sequence>
<proteinExistence type="evidence at transcript level"/>
<protein>
    <recommendedName>
        <fullName>Voltage-dependent N-type calcium channel subunit alpha-1B</fullName>
    </recommendedName>
    <alternativeName>
        <fullName>CHCACHA1B</fullName>
    </alternativeName>
    <alternativeName>
        <fullName>Voltage-gated calcium channel subunit alpha Cav2.2</fullName>
    </alternativeName>
</protein>
<name>CAC1B_CHICK</name>
<accession>O73706</accession>
<keyword id="KW-0106">Calcium</keyword>
<keyword id="KW-0107">Calcium channel</keyword>
<keyword id="KW-0109">Calcium transport</keyword>
<keyword id="KW-1015">Disulfide bond</keyword>
<keyword id="KW-0325">Glycoprotein</keyword>
<keyword id="KW-0407">Ion channel</keyword>
<keyword id="KW-0406">Ion transport</keyword>
<keyword id="KW-0472">Membrane</keyword>
<keyword id="KW-0597">Phosphoprotein</keyword>
<keyword id="KW-1185">Reference proteome</keyword>
<keyword id="KW-0677">Repeat</keyword>
<keyword id="KW-0812">Transmembrane</keyword>
<keyword id="KW-1133">Transmembrane helix</keyword>
<keyword id="KW-0813">Transport</keyword>
<keyword id="KW-0851">Voltage-gated channel</keyword>
<dbReference type="EMBL" id="AF027609">
    <property type="protein sequence ID" value="AAC08310.1"/>
    <property type="molecule type" value="mRNA"/>
</dbReference>
<dbReference type="SMR" id="O73706"/>
<dbReference type="FunCoup" id="O73706">
    <property type="interactions" value="53"/>
</dbReference>
<dbReference type="STRING" id="9031.ENSGALP00000039311"/>
<dbReference type="GlyCosmos" id="O73706">
    <property type="glycosylation" value="1 site, No reported glycans"/>
</dbReference>
<dbReference type="GlyGen" id="O73706">
    <property type="glycosylation" value="1 site"/>
</dbReference>
<dbReference type="PaxDb" id="9031-ENSGALP00000039311"/>
<dbReference type="VEuPathDB" id="HostDB:geneid_374169"/>
<dbReference type="eggNOG" id="KOG2301">
    <property type="taxonomic scope" value="Eukaryota"/>
</dbReference>
<dbReference type="HOGENOM" id="CLU_000540_1_0_1"/>
<dbReference type="InParanoid" id="O73706"/>
<dbReference type="OrthoDB" id="431720at2759"/>
<dbReference type="Proteomes" id="UP000000539">
    <property type="component" value="Unassembled WGS sequence"/>
</dbReference>
<dbReference type="GO" id="GO:0044305">
    <property type="term" value="C:calyx of Held"/>
    <property type="evidence" value="ECO:0000314"/>
    <property type="project" value="SynGO"/>
</dbReference>
<dbReference type="GO" id="GO:0042734">
    <property type="term" value="C:presynaptic membrane"/>
    <property type="evidence" value="ECO:0000314"/>
    <property type="project" value="SynGO"/>
</dbReference>
<dbReference type="GO" id="GO:0005891">
    <property type="term" value="C:voltage-gated calcium channel complex"/>
    <property type="evidence" value="ECO:0007669"/>
    <property type="project" value="InterPro"/>
</dbReference>
<dbReference type="GO" id="GO:0005245">
    <property type="term" value="F:voltage-gated calcium channel activity"/>
    <property type="evidence" value="ECO:0007669"/>
    <property type="project" value="InterPro"/>
</dbReference>
<dbReference type="FunFam" id="1.10.287.70:FF:000068">
    <property type="entry name" value="Voltage-dependent N-type calcium channel subunit alpha"/>
    <property type="match status" value="1"/>
</dbReference>
<dbReference type="Gene3D" id="1.10.287.70">
    <property type="match status" value="1"/>
</dbReference>
<dbReference type="InterPro" id="IPR005821">
    <property type="entry name" value="Ion_trans_dom"/>
</dbReference>
<dbReference type="InterPro" id="IPR050599">
    <property type="entry name" value="VDCC_alpha-1_subunit"/>
</dbReference>
<dbReference type="InterPro" id="IPR002077">
    <property type="entry name" value="VDCCAlpha1"/>
</dbReference>
<dbReference type="PANTHER" id="PTHR45628">
    <property type="entry name" value="VOLTAGE-DEPENDENT CALCIUM CHANNEL TYPE A SUBUNIT ALPHA-1"/>
    <property type="match status" value="1"/>
</dbReference>
<dbReference type="PANTHER" id="PTHR45628:SF6">
    <property type="entry name" value="VOLTAGE-DEPENDENT N-TYPE CALCIUM CHANNEL SUBUNIT ALPHA-1B"/>
    <property type="match status" value="1"/>
</dbReference>
<dbReference type="Pfam" id="PF00520">
    <property type="entry name" value="Ion_trans"/>
    <property type="match status" value="1"/>
</dbReference>
<dbReference type="PRINTS" id="PR00167">
    <property type="entry name" value="CACHANNEL"/>
</dbReference>
<dbReference type="SUPFAM" id="SSF81324">
    <property type="entry name" value="Voltage-gated potassium channels"/>
    <property type="match status" value="1"/>
</dbReference>
<gene>
    <name type="primary">CACNA1B</name>
</gene>
<reference key="1">
    <citation type="journal article" date="1997" name="Proc. Natl. Acad. Sci. U.S.A.">
        <title>Predominance of the alpha1D subunit in L-type voltage-gated Ca2+ channels of hair cells in the chicken's cochlea.</title>
        <authorList>
            <person name="Kollmar R."/>
            <person name="Montgomery L.G."/>
            <person name="Fak J."/>
            <person name="Henry L.J."/>
            <person name="Hudspeth A.J."/>
        </authorList>
    </citation>
    <scope>NUCLEOTIDE SEQUENCE [MRNA]</scope>
    <source>
        <strain>White leghorn</strain>
        <tissue>Brain</tissue>
    </source>
</reference>